<reference key="1">
    <citation type="journal article" date="2019" name="Nat. Commun.">
        <title>Repeated evolution of cytochrome P450-mediated spiroketal steroid biosynthesis in plants.</title>
        <authorList>
            <person name="Christ B."/>
            <person name="Xu C."/>
            <person name="Xu M."/>
            <person name="Li F.-S."/>
            <person name="Wada N."/>
            <person name="Mitchell A.J."/>
            <person name="Han X.-L."/>
            <person name="Wen M.-L."/>
            <person name="Fujita M."/>
            <person name="Weng J.-K."/>
        </authorList>
    </citation>
    <scope>NUCLEOTIDE SEQUENCE [MRNA]</scope>
    <scope>FUNCTION</scope>
    <scope>MUTAGENESIS OF PHE-65; ARG-112; GLY-115; LEU-151; VAL-155; THR-209; SER-284; ALA-288 AND TYR-371</scope>
    <scope>CATALYTIC ACTIVITY</scope>
    <scope>PATHWAY</scope>
    <scope>TISSUE SPECIFICITY</scope>
    <source>
        <tissue>Flower</tissue>
        <tissue>Leaf</tissue>
        <tissue>Pod</tissue>
        <tissue>Stem</tissue>
    </source>
</reference>
<dbReference type="EC" id="1.14.14.-" evidence="3"/>
<dbReference type="EMBL" id="MK636706">
    <property type="protein sequence ID" value="QDS03632.1"/>
    <property type="molecule type" value="mRNA"/>
</dbReference>
<dbReference type="SMR" id="A0A517FNC6"/>
<dbReference type="UniPathway" id="UPA00296"/>
<dbReference type="GO" id="GO:0016020">
    <property type="term" value="C:membrane"/>
    <property type="evidence" value="ECO:0007669"/>
    <property type="project" value="UniProtKB-SubCell"/>
</dbReference>
<dbReference type="GO" id="GO:0020037">
    <property type="term" value="F:heme binding"/>
    <property type="evidence" value="ECO:0007669"/>
    <property type="project" value="InterPro"/>
</dbReference>
<dbReference type="GO" id="GO:0005506">
    <property type="term" value="F:iron ion binding"/>
    <property type="evidence" value="ECO:0007669"/>
    <property type="project" value="InterPro"/>
</dbReference>
<dbReference type="GO" id="GO:0004497">
    <property type="term" value="F:monooxygenase activity"/>
    <property type="evidence" value="ECO:0007669"/>
    <property type="project" value="UniProtKB-KW"/>
</dbReference>
<dbReference type="GO" id="GO:0016705">
    <property type="term" value="F:oxidoreductase activity, acting on paired donors, with incorporation or reduction of molecular oxygen"/>
    <property type="evidence" value="ECO:0000314"/>
    <property type="project" value="UniProtKB"/>
</dbReference>
<dbReference type="GO" id="GO:0016132">
    <property type="term" value="P:brassinosteroid biosynthetic process"/>
    <property type="evidence" value="ECO:0007669"/>
    <property type="project" value="UniProtKB-KW"/>
</dbReference>
<dbReference type="GO" id="GO:0010268">
    <property type="term" value="P:brassinosteroid homeostasis"/>
    <property type="evidence" value="ECO:0007669"/>
    <property type="project" value="TreeGrafter"/>
</dbReference>
<dbReference type="GO" id="GO:0008203">
    <property type="term" value="P:cholesterol metabolic process"/>
    <property type="evidence" value="ECO:0000314"/>
    <property type="project" value="UniProtKB"/>
</dbReference>
<dbReference type="GO" id="GO:0006694">
    <property type="term" value="P:steroid biosynthetic process"/>
    <property type="evidence" value="ECO:0000314"/>
    <property type="project" value="UniProtKB"/>
</dbReference>
<dbReference type="CDD" id="cd11043">
    <property type="entry name" value="CYP90-like"/>
    <property type="match status" value="1"/>
</dbReference>
<dbReference type="FunFam" id="1.10.630.10:FF:000061">
    <property type="entry name" value="Cytochrome P450 90B1"/>
    <property type="match status" value="1"/>
</dbReference>
<dbReference type="Gene3D" id="1.10.630.10">
    <property type="entry name" value="Cytochrome P450"/>
    <property type="match status" value="1"/>
</dbReference>
<dbReference type="InterPro" id="IPR001128">
    <property type="entry name" value="Cyt_P450"/>
</dbReference>
<dbReference type="InterPro" id="IPR017972">
    <property type="entry name" value="Cyt_P450_CS"/>
</dbReference>
<dbReference type="InterPro" id="IPR002401">
    <property type="entry name" value="Cyt_P450_E_grp-I"/>
</dbReference>
<dbReference type="InterPro" id="IPR036396">
    <property type="entry name" value="Cyt_P450_sf"/>
</dbReference>
<dbReference type="PANTHER" id="PTHR24286">
    <property type="entry name" value="CYTOCHROME P450 26"/>
    <property type="match status" value="1"/>
</dbReference>
<dbReference type="PANTHER" id="PTHR24286:SF194">
    <property type="entry name" value="STEROID (22S)-HYDROXYLASE"/>
    <property type="match status" value="1"/>
</dbReference>
<dbReference type="Pfam" id="PF00067">
    <property type="entry name" value="p450"/>
    <property type="match status" value="1"/>
</dbReference>
<dbReference type="PRINTS" id="PR00463">
    <property type="entry name" value="EP450I"/>
</dbReference>
<dbReference type="PRINTS" id="PR00385">
    <property type="entry name" value="P450"/>
</dbReference>
<dbReference type="SUPFAM" id="SSF48264">
    <property type="entry name" value="Cytochrome P450"/>
    <property type="match status" value="1"/>
</dbReference>
<dbReference type="PROSITE" id="PS00086">
    <property type="entry name" value="CYTOCHROME_P450"/>
    <property type="match status" value="1"/>
</dbReference>
<feature type="chain" id="PRO_0000456410" description="Cholesterol 22-monohydroxylase CYP90B51">
    <location>
        <begin position="1"/>
        <end position="491"/>
    </location>
</feature>
<feature type="transmembrane region" description="Helical" evidence="2">
    <location>
        <begin position="6"/>
        <end position="26"/>
    </location>
</feature>
<feature type="binding site" description="axial binding residue" evidence="1">
    <location>
        <position position="437"/>
    </location>
    <ligand>
        <name>heme</name>
        <dbReference type="ChEBI" id="CHEBI:30413"/>
    </ligand>
    <ligandPart>
        <name>Fe</name>
        <dbReference type="ChEBI" id="CHEBI:18248"/>
    </ligandPart>
</feature>
<feature type="mutagenesis site" description="Mimicking CYP90B50, increased cholesterol 16S,22S-dihydroxylase activity and production of furostanol-type steroid; when associated with K-112; A-115; F-151; S-155; S-209; G-284; G-288 and F-371." evidence="3">
    <original>F</original>
    <variation>Y</variation>
    <location>
        <position position="65"/>
    </location>
</feature>
<feature type="mutagenesis site" description="Mimicking CYP90B50, increased cholesterol 16S,22S-dihydroxylase activity and production of furostanol-type steroid; when associated with Y-65; A-115; F-151; S-155; S-209; G-284; G-288 and F-371." evidence="3">
    <original>R</original>
    <variation>K</variation>
    <location>
        <position position="112"/>
    </location>
</feature>
<feature type="mutagenesis site" description="Mimicking CYP90B50, increased cholesterol 16S,22S-dihydroxylase activity and production of furostanol-type steroid; when associated with Y-65; K-112; F-151; S-155; S-209; G-284; G-288 and F-371." evidence="3">
    <original>G</original>
    <variation>A</variation>
    <location>
        <position position="115"/>
    </location>
</feature>
<feature type="mutagenesis site" description="Mimicking CYP90B50, increased cholesterol 16S,22S-dihydroxylase activity and production of furostanol-type steroid; when associated with Y-65; K-112; A-115; S-155; S-209; G-284; G-288 and F-371." evidence="3">
    <original>L</original>
    <variation>F</variation>
    <location>
        <position position="151"/>
    </location>
</feature>
<feature type="mutagenesis site" description="Mimicking CYP90B50, increased cholesterol 16S,22S-dihydroxylase activity and production of furostanol-type steroid; when associated with Y-65; K-112; A-115; F-151; S-209; G-284; G-288 and F-371." evidence="3">
    <original>V</original>
    <variation>S</variation>
    <location>
        <position position="155"/>
    </location>
</feature>
<feature type="mutagenesis site" description="Mimicking CYP90B50, increased cholesterol 16S,22S-dihydroxylase activity and production of furostanol-type steroid; when associated with Y-65; K-112; A-115; F-151; S-155; G-284; G-288 and F-371." evidence="3">
    <original>T</original>
    <variation>S</variation>
    <location>
        <position position="209"/>
    </location>
</feature>
<feature type="mutagenesis site" description="Mimicking CYP90B50, increased cholesterol 16S,22S-dihydroxylase activity and production of furostanol-type steroid; when associated with Y-65; K-112; A-115; F-151; S-155; S-209; G-288 and F-371." evidence="3">
    <original>S</original>
    <variation>G</variation>
    <location>
        <position position="284"/>
    </location>
</feature>
<feature type="mutagenesis site" description="Mimicking CYP90B50, increased cholesterol 16S,22S-dihydroxylase activity and production of furostanol-type steroid; when associated with Y-65; K-112; A-115; F-151; S-155; S-209; G-284 and F-371." evidence="3">
    <original>A</original>
    <variation>G</variation>
    <location>
        <position position="288"/>
    </location>
</feature>
<feature type="mutagenesis site" description="Mimicking CYP90B50, increased cholesterol 16S,22S-dihydroxylase activity and production of furostanol-type steroid; when associated with Y-65; K-112; A-115; F-151; S-155; S-209; G-284 and G-288." evidence="3">
    <original>Y</original>
    <variation>F</variation>
    <location>
        <position position="371"/>
    </location>
</feature>
<proteinExistence type="evidence at protein level"/>
<comment type="function">
    <text evidence="3">Canonical brassinosteroid (BR)-biosynthetic enzyme capable of converting cholesterol to 22S-hydroxycholesterol via sterol-C22 hydroxylation.</text>
</comment>
<comment type="catalytic activity">
    <reaction evidence="3">
        <text>cholesterol + reduced [NADPH--hemoprotein reductase] + O2 = (22S)-22-hydroxycholesterol + oxidized [NADPH--hemoprotein reductase] + H2O + H(+)</text>
        <dbReference type="Rhea" id="RHEA:69839"/>
        <dbReference type="Rhea" id="RHEA-COMP:11964"/>
        <dbReference type="Rhea" id="RHEA-COMP:11965"/>
        <dbReference type="ChEBI" id="CHEBI:1301"/>
        <dbReference type="ChEBI" id="CHEBI:15377"/>
        <dbReference type="ChEBI" id="CHEBI:15378"/>
        <dbReference type="ChEBI" id="CHEBI:15379"/>
        <dbReference type="ChEBI" id="CHEBI:16113"/>
        <dbReference type="ChEBI" id="CHEBI:57618"/>
        <dbReference type="ChEBI" id="CHEBI:58210"/>
    </reaction>
    <physiologicalReaction direction="left-to-right" evidence="3">
        <dbReference type="Rhea" id="RHEA:69840"/>
    </physiologicalReaction>
</comment>
<comment type="pathway">
    <text evidence="3">Steroid metabolism; cholesterol metabolism.</text>
</comment>
<comment type="subcellular location">
    <subcellularLocation>
        <location evidence="2">Membrane</location>
        <topology evidence="2">Single-pass membrane protein</topology>
    </subcellularLocation>
</comment>
<comment type="tissue specificity">
    <text evidence="3">Mainly expressed in leaves and seed pods and, to a lower extent, in flowers and stems.</text>
</comment>
<comment type="similarity">
    <text evidence="5">Belongs to the cytochrome P450 family.</text>
</comment>
<accession>A0A517FNC6</accession>
<sequence>MSDSDITFYCLSSILSVLLIFIFILIKRKQAKPKLNLPPGKMGWPFLGETIGYLKPYSATTLGEFMDQHIARYGKIYKSKLFGEPAIVSADAGLNRFILQNEGKLFECSYPRSIGGILGKWSMLVLVGDMHRDMRLISLNFLSHARLRTHLLKEVEKHTRLVISSWKENSTFAAQDEAKKFTFNLMAEHIMSLQPGKIETEKLKKEYVTFMKGVVSAPLNFPGTAYWKALKSRGTILKFIEGKMEERIKRMKEGNENLEEDDLLNWVLKHSNLSTEQILDLILSLLFAGHETSSVSIALAIYFLPGCPQAILQLREEHKEIARAKKQAGETELTWEDYKKMEFTHCVVNETLRLGNVVRFLHRKALKDVRYKGYDIPCGWKVLPVIAAVHLDPLLFDQPQHFNPWRWQNNGNCPNFSGASSNSNNIFLPFGGGPRLCAGSELAKLEMAVFIHHLILNYHWELTDNNDQAFAYPFVDFPKGLQIRVQSHSLI</sequence>
<evidence type="ECO:0000250" key="1">
    <source>
        <dbReference type="UniProtKB" id="P04798"/>
    </source>
</evidence>
<evidence type="ECO:0000255" key="2"/>
<evidence type="ECO:0000269" key="3">
    <source>
    </source>
</evidence>
<evidence type="ECO:0000303" key="4">
    <source>
    </source>
</evidence>
<evidence type="ECO:0000305" key="5"/>
<gene>
    <name evidence="4" type="primary">CYP90B51</name>
</gene>
<organism>
    <name type="scientific">Trigonella foenum-graecum</name>
    <name type="common">Fenugreek</name>
    <dbReference type="NCBI Taxonomy" id="78534"/>
    <lineage>
        <taxon>Eukaryota</taxon>
        <taxon>Viridiplantae</taxon>
        <taxon>Streptophyta</taxon>
        <taxon>Embryophyta</taxon>
        <taxon>Tracheophyta</taxon>
        <taxon>Spermatophyta</taxon>
        <taxon>Magnoliopsida</taxon>
        <taxon>eudicotyledons</taxon>
        <taxon>Gunneridae</taxon>
        <taxon>Pentapetalae</taxon>
        <taxon>rosids</taxon>
        <taxon>fabids</taxon>
        <taxon>Fabales</taxon>
        <taxon>Fabaceae</taxon>
        <taxon>Papilionoideae</taxon>
        <taxon>50 kb inversion clade</taxon>
        <taxon>NPAAA clade</taxon>
        <taxon>Hologalegina</taxon>
        <taxon>IRL clade</taxon>
        <taxon>Trifolieae</taxon>
        <taxon>Trigonella</taxon>
    </lineage>
</organism>
<name>C9B51_TRIFG</name>
<protein>
    <recommendedName>
        <fullName evidence="4">Cholesterol 22-monohydroxylase CYP90B51</fullName>
        <ecNumber evidence="3">1.14.14.-</ecNumber>
    </recommendedName>
    <alternativeName>
        <fullName evidence="4">Cytochrome P450 CYP90B51</fullName>
        <shortName evidence="4">PpCYP90B51</shortName>
    </alternativeName>
</protein>
<keyword id="KW-1069">Brassinosteroid biosynthesis</keyword>
<keyword id="KW-0153">Cholesterol metabolism</keyword>
<keyword id="KW-0349">Heme</keyword>
<keyword id="KW-0408">Iron</keyword>
<keyword id="KW-0444">Lipid biosynthesis</keyword>
<keyword id="KW-0443">Lipid metabolism</keyword>
<keyword id="KW-0472">Membrane</keyword>
<keyword id="KW-0479">Metal-binding</keyword>
<keyword id="KW-0503">Monooxygenase</keyword>
<keyword id="KW-0560">Oxidoreductase</keyword>
<keyword id="KW-0752">Steroid biosynthesis</keyword>
<keyword id="KW-0753">Steroid metabolism</keyword>
<keyword id="KW-1207">Sterol metabolism</keyword>
<keyword id="KW-0812">Transmembrane</keyword>
<keyword id="KW-1133">Transmembrane helix</keyword>